<comment type="function">
    <text evidence="3">Required for normal spindle orientation at male meiosis II and normal formation of tetrad of microspores. Not involved in female meiosis.</text>
</comment>
<comment type="disruption phenotype">
    <text evidence="3">Diploid pollen grains (dyads of spores instead of tetrads) due to defective meiosis II. Abnormal spindle orientation at meiosis II.</text>
</comment>
<comment type="miscellaneous">
    <text evidence="3">Diploid male spores in sp1 mutants give rise to viable diploid pollen grains and spontaneous triploid plants in the next generation.</text>
</comment>
<comment type="sequence caution" evidence="5">
    <conflict type="erroneous gene model prediction">
        <sequence resource="EMBL-CDS" id="AAG51901"/>
    </conflict>
</comment>
<organism>
    <name type="scientific">Arabidopsis thaliana</name>
    <name type="common">Mouse-ear cress</name>
    <dbReference type="NCBI Taxonomy" id="3702"/>
    <lineage>
        <taxon>Eukaryota</taxon>
        <taxon>Viridiplantae</taxon>
        <taxon>Streptophyta</taxon>
        <taxon>Embryophyta</taxon>
        <taxon>Tracheophyta</taxon>
        <taxon>Spermatophyta</taxon>
        <taxon>Magnoliopsida</taxon>
        <taxon>eudicotyledons</taxon>
        <taxon>Gunneridae</taxon>
        <taxon>Pentapetalae</taxon>
        <taxon>rosids</taxon>
        <taxon>malvids</taxon>
        <taxon>Brassicales</taxon>
        <taxon>Brassicaceae</taxon>
        <taxon>Camelineae</taxon>
        <taxon>Arabidopsis</taxon>
    </lineage>
</organism>
<proteinExistence type="evidence at transcript level"/>
<accession>B7SY83</accession>
<accession>Q9C8N3</accession>
<reference key="1">
    <citation type="journal article" date="2008" name="PLoS Genet.">
        <title>Mutations in AtPS1 (Arabidopsis thaliana parallel spindle 1) lead to the production of diploid pollen grains.</title>
        <authorList>
            <person name="d'Erfurth I."/>
            <person name="Jolivet S."/>
            <person name="Froger N."/>
            <person name="Catrice O."/>
            <person name="Novatchkova M."/>
            <person name="Simon M."/>
            <person name="Jenczewski E."/>
            <person name="Mercier R."/>
        </authorList>
    </citation>
    <scope>NUCLEOTIDE SEQUENCE [MRNA]</scope>
    <scope>FUNCTION</scope>
    <scope>DISRUPTION PHENOTYPE</scope>
</reference>
<reference key="2">
    <citation type="journal article" date="2000" name="Nature">
        <title>Sequence and analysis of chromosome 1 of the plant Arabidopsis thaliana.</title>
        <authorList>
            <person name="Theologis A."/>
            <person name="Ecker J.R."/>
            <person name="Palm C.J."/>
            <person name="Federspiel N.A."/>
            <person name="Kaul S."/>
            <person name="White O."/>
            <person name="Alonso J."/>
            <person name="Altafi H."/>
            <person name="Araujo R."/>
            <person name="Bowman C.L."/>
            <person name="Brooks S.Y."/>
            <person name="Buehler E."/>
            <person name="Chan A."/>
            <person name="Chao Q."/>
            <person name="Chen H."/>
            <person name="Cheuk R.F."/>
            <person name="Chin C.W."/>
            <person name="Chung M.K."/>
            <person name="Conn L."/>
            <person name="Conway A.B."/>
            <person name="Conway A.R."/>
            <person name="Creasy T.H."/>
            <person name="Dewar K."/>
            <person name="Dunn P."/>
            <person name="Etgu P."/>
            <person name="Feldblyum T.V."/>
            <person name="Feng J.-D."/>
            <person name="Fong B."/>
            <person name="Fujii C.Y."/>
            <person name="Gill J.E."/>
            <person name="Goldsmith A.D."/>
            <person name="Haas B."/>
            <person name="Hansen N.F."/>
            <person name="Hughes B."/>
            <person name="Huizar L."/>
            <person name="Hunter J.L."/>
            <person name="Jenkins J."/>
            <person name="Johnson-Hopson C."/>
            <person name="Khan S."/>
            <person name="Khaykin E."/>
            <person name="Kim C.J."/>
            <person name="Koo H.L."/>
            <person name="Kremenetskaia I."/>
            <person name="Kurtz D.B."/>
            <person name="Kwan A."/>
            <person name="Lam B."/>
            <person name="Langin-Hooper S."/>
            <person name="Lee A."/>
            <person name="Lee J.M."/>
            <person name="Lenz C.A."/>
            <person name="Li J.H."/>
            <person name="Li Y.-P."/>
            <person name="Lin X."/>
            <person name="Liu S.X."/>
            <person name="Liu Z.A."/>
            <person name="Luros J.S."/>
            <person name="Maiti R."/>
            <person name="Marziali A."/>
            <person name="Militscher J."/>
            <person name="Miranda M."/>
            <person name="Nguyen M."/>
            <person name="Nierman W.C."/>
            <person name="Osborne B.I."/>
            <person name="Pai G."/>
            <person name="Peterson J."/>
            <person name="Pham P.K."/>
            <person name="Rizzo M."/>
            <person name="Rooney T."/>
            <person name="Rowley D."/>
            <person name="Sakano H."/>
            <person name="Salzberg S.L."/>
            <person name="Schwartz J.R."/>
            <person name="Shinn P."/>
            <person name="Southwick A.M."/>
            <person name="Sun H."/>
            <person name="Tallon L.J."/>
            <person name="Tambunga G."/>
            <person name="Toriumi M.J."/>
            <person name="Town C.D."/>
            <person name="Utterback T."/>
            <person name="Van Aken S."/>
            <person name="Vaysberg M."/>
            <person name="Vysotskaia V.S."/>
            <person name="Walker M."/>
            <person name="Wu D."/>
            <person name="Yu G."/>
            <person name="Fraser C.M."/>
            <person name="Venter J.C."/>
            <person name="Davis R.W."/>
        </authorList>
    </citation>
    <scope>NUCLEOTIDE SEQUENCE [LARGE SCALE GENOMIC DNA]</scope>
    <source>
        <strain>cv. Columbia</strain>
    </source>
</reference>
<reference key="3">
    <citation type="journal article" date="2017" name="Plant J.">
        <title>Araport11: a complete reannotation of the Arabidopsis thaliana reference genome.</title>
        <authorList>
            <person name="Cheng C.Y."/>
            <person name="Krishnakumar V."/>
            <person name="Chan A.P."/>
            <person name="Thibaud-Nissen F."/>
            <person name="Schobel S."/>
            <person name="Town C.D."/>
        </authorList>
    </citation>
    <scope>GENOME REANNOTATION</scope>
    <source>
        <strain>cv. Columbia</strain>
    </source>
</reference>
<evidence type="ECO:0000255" key="1">
    <source>
        <dbReference type="PROSITE-ProRule" id="PRU00086"/>
    </source>
</evidence>
<evidence type="ECO:0000256" key="2">
    <source>
        <dbReference type="SAM" id="MobiDB-lite"/>
    </source>
</evidence>
<evidence type="ECO:0000269" key="3">
    <source>
    </source>
</evidence>
<evidence type="ECO:0000303" key="4">
    <source>
    </source>
</evidence>
<evidence type="ECO:0000305" key="5"/>
<evidence type="ECO:0000312" key="6">
    <source>
        <dbReference type="Araport" id="AT1G34355"/>
    </source>
</evidence>
<gene>
    <name evidence="4" type="primary">PS1</name>
    <name evidence="6" type="ordered locus">At1g34355</name>
</gene>
<name>PS1_ARATH</name>
<keyword id="KW-0469">Meiosis</keyword>
<keyword id="KW-1185">Reference proteome</keyword>
<protein>
    <recommendedName>
        <fullName evidence="5">FHA domain-containing protein PS1</fullName>
    </recommendedName>
    <alternativeName>
        <fullName evidence="4">Protein PARALLEL SPINDLE 1</fullName>
        <shortName evidence="4">AtPS1</shortName>
    </alternativeName>
</protein>
<dbReference type="EMBL" id="EU839993">
    <property type="protein sequence ID" value="ACJ23185.1"/>
    <property type="molecule type" value="mRNA"/>
</dbReference>
<dbReference type="EMBL" id="AC023913">
    <property type="protein sequence ID" value="AAG51901.1"/>
    <property type="status" value="ALT_SEQ"/>
    <property type="molecule type" value="Genomic_DNA"/>
</dbReference>
<dbReference type="EMBL" id="CP002684">
    <property type="protein sequence ID" value="AEE31701.1"/>
    <property type="molecule type" value="Genomic_DNA"/>
</dbReference>
<dbReference type="PIR" id="G86467">
    <property type="entry name" value="G86467"/>
</dbReference>
<dbReference type="RefSeq" id="NP_564445.1">
    <property type="nucleotide sequence ID" value="NM_103158.3"/>
</dbReference>
<dbReference type="SMR" id="B7SY83"/>
<dbReference type="FunCoup" id="B7SY83">
    <property type="interactions" value="285"/>
</dbReference>
<dbReference type="STRING" id="3702.B7SY83"/>
<dbReference type="GlyGen" id="B7SY83">
    <property type="glycosylation" value="1 site"/>
</dbReference>
<dbReference type="iPTMnet" id="B7SY83"/>
<dbReference type="PaxDb" id="3702-AT1G34355.1"/>
<dbReference type="ProteomicsDB" id="226383"/>
<dbReference type="EnsemblPlants" id="AT1G34355.1">
    <property type="protein sequence ID" value="AT1G34355.1"/>
    <property type="gene ID" value="AT1G34355"/>
</dbReference>
<dbReference type="GeneID" id="840337"/>
<dbReference type="Gramene" id="AT1G34355.1">
    <property type="protein sequence ID" value="AT1G34355.1"/>
    <property type="gene ID" value="AT1G34355"/>
</dbReference>
<dbReference type="KEGG" id="ath:AT1G34355"/>
<dbReference type="Araport" id="AT1G34355"/>
<dbReference type="TAIR" id="AT1G34355">
    <property type="gene designation" value="PS1"/>
</dbReference>
<dbReference type="eggNOG" id="KOG1881">
    <property type="taxonomic scope" value="Eukaryota"/>
</dbReference>
<dbReference type="HOGENOM" id="CLU_008034_0_0_1"/>
<dbReference type="InParanoid" id="B7SY83"/>
<dbReference type="PRO" id="PR:B7SY83"/>
<dbReference type="Proteomes" id="UP000006548">
    <property type="component" value="Chromosome 1"/>
</dbReference>
<dbReference type="ExpressionAtlas" id="B7SY83">
    <property type="expression patterns" value="baseline and differential"/>
</dbReference>
<dbReference type="GO" id="GO:0051321">
    <property type="term" value="P:meiotic cell cycle"/>
    <property type="evidence" value="ECO:0007669"/>
    <property type="project" value="UniProtKB-KW"/>
</dbReference>
<dbReference type="GO" id="GO:0009555">
    <property type="term" value="P:pollen development"/>
    <property type="evidence" value="ECO:0000315"/>
    <property type="project" value="TAIR"/>
</dbReference>
<dbReference type="CDD" id="cd22691">
    <property type="entry name" value="FHA_PS1-like"/>
    <property type="match status" value="1"/>
</dbReference>
<dbReference type="CDD" id="cd09880">
    <property type="entry name" value="PIN_Smg5-6-like"/>
    <property type="match status" value="1"/>
</dbReference>
<dbReference type="FunFam" id="3.40.50.1010:FF:000116">
    <property type="entry name" value="Forkhead-associated (FHA) domain-containing protein"/>
    <property type="match status" value="1"/>
</dbReference>
<dbReference type="Gene3D" id="2.60.200.20">
    <property type="match status" value="1"/>
</dbReference>
<dbReference type="Gene3D" id="3.40.50.1010">
    <property type="entry name" value="5'-nuclease"/>
    <property type="match status" value="1"/>
</dbReference>
<dbReference type="InterPro" id="IPR000253">
    <property type="entry name" value="FHA_dom"/>
</dbReference>
<dbReference type="InterPro" id="IPR029060">
    <property type="entry name" value="PIN-like_dom_sf"/>
</dbReference>
<dbReference type="InterPro" id="IPR002716">
    <property type="entry name" value="PIN_dom"/>
</dbReference>
<dbReference type="InterPro" id="IPR008984">
    <property type="entry name" value="SMAD_FHA_dom_sf"/>
</dbReference>
<dbReference type="PANTHER" id="PTHR22593:SF8">
    <property type="entry name" value="FHA DOMAIN-CONTAINING PROTEIN PS1"/>
    <property type="match status" value="1"/>
</dbReference>
<dbReference type="PANTHER" id="PTHR22593">
    <property type="entry name" value="TRANSMEMBRANE PROTEIN 18"/>
    <property type="match status" value="1"/>
</dbReference>
<dbReference type="Pfam" id="PF00498">
    <property type="entry name" value="FHA"/>
    <property type="match status" value="1"/>
</dbReference>
<dbReference type="Pfam" id="PF13638">
    <property type="entry name" value="PIN_4"/>
    <property type="match status" value="1"/>
</dbReference>
<dbReference type="SMART" id="SM00240">
    <property type="entry name" value="FHA"/>
    <property type="match status" value="1"/>
</dbReference>
<dbReference type="SUPFAM" id="SSF88723">
    <property type="entry name" value="PIN domain-like"/>
    <property type="match status" value="1"/>
</dbReference>
<dbReference type="SUPFAM" id="SSF49879">
    <property type="entry name" value="SMAD/FHA domain"/>
    <property type="match status" value="1"/>
</dbReference>
<dbReference type="PROSITE" id="PS50006">
    <property type="entry name" value="FHA_DOMAIN"/>
    <property type="match status" value="1"/>
</dbReference>
<sequence>MEVKEEKLMEEKQRLPEKTIPVFTVLKNGAILKNIFVVNSRDFSSPERNGSTVSDDDGEVEEILVVGRHPDCDILLTHPSISRFHLEIRSISSRQKLFVTDLSSVHGTWVRDLRIEPHGCVEVEEGDTIRIGGSTRIYRLHWIPLSRAYDLDNPFVSPLDASTVLEQEEENRMLEAENLEVAQHQSLENTTSGDEGVLHLDVTSEGTGSSVPSEDEDTYVTTREMSMPVASPSVLTLVRDSVETQKLQFNEDLQTSPKWDLDVIESVAEKLSGSFVRSTQQSGGDVEGLGCSELFDAAEADECDVRGDGGLHLNVISEKMESSVPNMIEAENLEVAQHQSLANTALGDDEDLHLDVTSEGTGSSVPSEDEDTYITTMEISVPLASPNVLTLARDSIKTQKLQSTQDFQTPTMWDLDVVEAAAEKPSSSCVLGKKLSGGYVEELGCFELFVAAEADKCDVRGDGSLHLNEISERMESSMSNKEDDPFLAAKETSSLPLSTDFINPETLWLVEDVQASPEFCTSSVKANAENPSSGCSPSTEQIDGCFETSGCSAFDLAAEVESLSLHQEVSEETEFVTKEVMGVSSEPLGKADIRSHEENGESEDSRQVIEVSAEPVAKADIQSHEENGETEGSRQVIEVSPKSFSEAEPTIEILTGEAQGIIGSEFPSELAVETESENLLHQKSIGETKNEIRSHEDYGETEDYGETECSWPDIAVSPSSVSPPEPTLEILTDEARGLLGSEFLSEVTVETEIENLLHQKSNVETKADILIHEDYGETEVSRQIITVSPNSFSKAEPTLETEDSRQQARGLVGSDSEFQSEVAMKTECENLLNQKRNGETKVSSRQASPVSDCLSTPKDRLSSINTDDIQSLCSSSQPPSESEVNPATDQDQESGIISETEKPKTELLIGSGRSEKYYSLSEIEGEENTDIGRLSRCPIPSALAAKTSEDTKLIEELSSSDSGSQENQTPETHAVRDDVLCDMDSSSTCNIWSRRGKAASVLKIRTNKSQGKQKQTGRQPKDKLHRKQALSDKSISLTIHHGAEILEPEIFTPDKENLTPSSHMLKRLQDIGDVKDSKSSLKLSGKSCSSLVHSSIAVLASEAFTEPEIFTPDKENLTPSSHMLKRLREFGDIKDTKGSSSKATRKPFFDIRMEENVMVEQEPEDLHSLGSKSKLKHEPLAPKKKAERAPFQPLLEKSSFQSQSYTEASSTASARNNISRGIRSSSNLSDAKSKMKWTIVLDTSSLLDKESRKPLQLLQGLKGTHLVVPRTVLRELNEVKRSRSFLFRRRTEIASSALDWIEECKVNSKWWIQVQSPTEETKAIAPTPPVTPQSNGSSAFPFSLHWNNYAPEIDSPTSEDQVLECALLYRNRNRDEKLVLLSNDVTLKIKAMAEGVICETPHEFYESLVNPFSERFMWTESTARGRTWSHLDNDVLRERYNDRACRRKSTYNRGESGAAAKGLKLILLHNSHYGHTH</sequence>
<feature type="chain" id="PRO_0000433007" description="FHA domain-containing protein PS1">
    <location>
        <begin position="1"/>
        <end position="1477"/>
    </location>
</feature>
<feature type="domain" description="FHA" evidence="1">
    <location>
        <begin position="64"/>
        <end position="115"/>
    </location>
</feature>
<feature type="region of interest" description="Disordered" evidence="2">
    <location>
        <begin position="188"/>
        <end position="218"/>
    </location>
</feature>
<feature type="region of interest" description="Disordered" evidence="2">
    <location>
        <begin position="588"/>
        <end position="644"/>
    </location>
</feature>
<feature type="region of interest" description="Disordered" evidence="2">
    <location>
        <begin position="789"/>
        <end position="818"/>
    </location>
</feature>
<feature type="region of interest" description="Disordered" evidence="2">
    <location>
        <begin position="832"/>
        <end position="911"/>
    </location>
</feature>
<feature type="region of interest" description="Disordered" evidence="2">
    <location>
        <begin position="942"/>
        <end position="979"/>
    </location>
</feature>
<feature type="region of interest" description="Disordered" evidence="2">
    <location>
        <begin position="1004"/>
        <end position="1030"/>
    </location>
</feature>
<feature type="region of interest" description="Disordered" evidence="2">
    <location>
        <begin position="1159"/>
        <end position="1225"/>
    </location>
</feature>
<feature type="compositionally biased region" description="Basic and acidic residues" evidence="2">
    <location>
        <begin position="589"/>
        <end position="607"/>
    </location>
</feature>
<feature type="compositionally biased region" description="Polar residues" evidence="2">
    <location>
        <begin position="832"/>
        <end position="849"/>
    </location>
</feature>
<feature type="compositionally biased region" description="Low complexity" evidence="2">
    <location>
        <begin position="870"/>
        <end position="883"/>
    </location>
</feature>
<feature type="compositionally biased region" description="Polar residues" evidence="2">
    <location>
        <begin position="885"/>
        <end position="897"/>
    </location>
</feature>
<feature type="compositionally biased region" description="Polar residues" evidence="2">
    <location>
        <begin position="957"/>
        <end position="971"/>
    </location>
</feature>
<feature type="compositionally biased region" description="Polar residues" evidence="2">
    <location>
        <begin position="1007"/>
        <end position="1018"/>
    </location>
</feature>
<feature type="compositionally biased region" description="Polar residues" evidence="2">
    <location>
        <begin position="1198"/>
        <end position="1212"/>
    </location>
</feature>
<feature type="compositionally biased region" description="Low complexity" evidence="2">
    <location>
        <begin position="1213"/>
        <end position="1225"/>
    </location>
</feature>